<sequence length="356" mass="40233">MSADLAMGPELPTSPLALEYVNDFDLMKFEVKKEAMAAHDRANIRQCNRLQPQGSVSSTPISTPCSSVPSSPSFSPTEQKNHLEELYWMPSGAYPQQIDPQTLSLTPEDAVEALIGATAHGHPPPPHVQQQLQAGAFDGYRGAHHHHGHAQQQQQQQPQHHHHQHQYGAIPHHPDDLSGHPGAHGHHPHHHHHHHHSQDPDSPSPTSPEQLHHRHHHHHHPHGHPGQQGHHGVGGGLNVEDRFSDDQLVTMSVRELNRHLRGFTKDEVIRLKQKRRTLKNRGYAQSCRFKRVQQKHLLENEKTQLINQVEQLKQEINRLARERDAYKLKCEKLTGANGFREAGSTSDNPSSPEFFM</sequence>
<comment type="function">
    <text evidence="4">May act as a transcriptional activator or repressor. Involved in neurogenesis. Involved in the development of rhombomeres (r) 5 and 6 segments from their common precursor 'proto-segment' in the hindbrain.</text>
</comment>
<comment type="subunit">
    <text evidence="1">Homodimer or heterodimer with other bHLH-Zip transcription factors. Binds DNA as a homodimer or a heterodimer (By similarity).</text>
</comment>
<comment type="subcellular location">
    <subcellularLocation>
        <location evidence="2">Nucleus</location>
    </subcellularLocation>
</comment>
<comment type="developmental stage">
    <text evidence="5">Expressed in cells that spans the width of the neuronal plate in the presumptive hindbrain at the end of gastrulation. Expressed in r5- and r6-derived neuronal crest cells at the 14 somite stage. Expressed in r5 and r6 until the 20 somite stage (19 hours). Expressed in Mauthner cells of the r4, in cells of the blood-forming region at the base of the yolk extension, in Rohon-Beard cells in the trunk and tail, in a bilateral patch of cells ventral to the third somite which corresponds to the position of the primordial germ cells at 20 somite stage (19 hours). Expressed in r6 at 24 hours. Expressed in r4 and r5 at 42 hours.</text>
</comment>
<comment type="similarity">
    <text evidence="6">Belongs to the bZIP family. Maf subfamily.</text>
</comment>
<organism>
    <name type="scientific">Danio rerio</name>
    <name type="common">Zebrafish</name>
    <name type="synonym">Brachydanio rerio</name>
    <dbReference type="NCBI Taxonomy" id="7955"/>
    <lineage>
        <taxon>Eukaryota</taxon>
        <taxon>Metazoa</taxon>
        <taxon>Chordata</taxon>
        <taxon>Craniata</taxon>
        <taxon>Vertebrata</taxon>
        <taxon>Euteleostomi</taxon>
        <taxon>Actinopterygii</taxon>
        <taxon>Neopterygii</taxon>
        <taxon>Teleostei</taxon>
        <taxon>Ostariophysi</taxon>
        <taxon>Cypriniformes</taxon>
        <taxon>Danionidae</taxon>
        <taxon>Danioninae</taxon>
        <taxon>Danio</taxon>
    </lineage>
</organism>
<accession>Q98UK5</accession>
<accession>O73679</accession>
<gene>
    <name type="primary">mafb</name>
    <name type="synonym">mafba</name>
    <name type="synonym">val</name>
</gene>
<protein>
    <recommendedName>
        <fullName>Transcription factor MafB</fullName>
        <shortName>Maf-B</shortName>
    </recommendedName>
    <alternativeName>
        <fullName>Transcription factor Val</fullName>
    </alternativeName>
    <alternativeName>
        <fullName>Valentino</fullName>
    </alternativeName>
</protein>
<keyword id="KW-0010">Activator</keyword>
<keyword id="KW-0238">DNA-binding</keyword>
<keyword id="KW-0539">Nucleus</keyword>
<keyword id="KW-1185">Reference proteome</keyword>
<keyword id="KW-0678">Repressor</keyword>
<keyword id="KW-0804">Transcription</keyword>
<keyword id="KW-0805">Transcription regulation</keyword>
<proteinExistence type="evidence at transcript level"/>
<reference key="1">
    <citation type="journal article" date="1998" name="Development">
        <title>Equivalence in the genetic control of hindbrain segmentation in fish and mouse.</title>
        <authorList>
            <person name="Moens C.B."/>
            <person name="Cordes S.P."/>
            <person name="Giorgianni M.W."/>
            <person name="Barsh G.S."/>
            <person name="Kimmel C.B."/>
        </authorList>
    </citation>
    <scope>NUCLEOTIDE SEQUENCE [MRNA]</scope>
    <scope>DEVELOPMENTAL STAGE</scope>
</reference>
<reference key="2">
    <citation type="journal article" date="2001" name="J. Biochem.">
        <title>Isolation, characterization, and expression analysis of zebrafish large Mafs.</title>
        <authorList>
            <person name="Kajihara M."/>
            <person name="Kawauchi S."/>
            <person name="Kobayashi M."/>
            <person name="Ogino H."/>
            <person name="Takahashi S."/>
            <person name="Yasuda K."/>
        </authorList>
    </citation>
    <scope>NUCLEOTIDE SEQUENCE [MRNA]</scope>
</reference>
<reference key="3">
    <citation type="submission" date="2006-06" db="EMBL/GenBank/DDBJ databases">
        <authorList>
            <consortium name="NIH - Zebrafish Gene Collection (ZGC) project"/>
        </authorList>
    </citation>
    <scope>NUCLEOTIDE SEQUENCE [LARGE SCALE MRNA]</scope>
</reference>
<reference key="4">
    <citation type="journal article" date="1996" name="Development">
        <title>valentino: a zebrafish gene required for normal hindbrain segmentation.</title>
        <authorList>
            <person name="Moens C.B."/>
            <person name="Yan Y.-L."/>
            <person name="Appel B."/>
            <person name="Force A.G."/>
            <person name="Kimmel C.B."/>
        </authorList>
    </citation>
    <scope>FUNCTION</scope>
</reference>
<dbReference type="EMBL" id="AF006641">
    <property type="protein sequence ID" value="AAC18821.1"/>
    <property type="molecule type" value="mRNA"/>
</dbReference>
<dbReference type="EMBL" id="AB006322">
    <property type="protein sequence ID" value="BAB21102.1"/>
    <property type="molecule type" value="mRNA"/>
</dbReference>
<dbReference type="EMBL" id="BC117640">
    <property type="protein sequence ID" value="AAI17641.1"/>
    <property type="molecule type" value="mRNA"/>
</dbReference>
<dbReference type="SMR" id="Q98UK5"/>
<dbReference type="FunCoup" id="Q98UK5">
    <property type="interactions" value="1345"/>
</dbReference>
<dbReference type="STRING" id="7955.ENSDARP00000018087"/>
<dbReference type="PaxDb" id="7955-ENSDARP00000018087"/>
<dbReference type="Ensembl" id="ENSDART00000193245">
    <property type="protein sequence ID" value="ENSDARP00000152024"/>
    <property type="gene ID" value="ENSDARG00000017121"/>
</dbReference>
<dbReference type="AGR" id="ZFIN:ZDB-GENE-980526-515"/>
<dbReference type="ZFIN" id="ZDB-GENE-980526-515">
    <property type="gene designation" value="mafba"/>
</dbReference>
<dbReference type="eggNOG" id="KOG4196">
    <property type="taxonomic scope" value="Eukaryota"/>
</dbReference>
<dbReference type="HOGENOM" id="CLU_063062_0_0_1"/>
<dbReference type="InParanoid" id="Q98UK5"/>
<dbReference type="PhylomeDB" id="Q98UK5"/>
<dbReference type="TreeFam" id="TF325689"/>
<dbReference type="SignaLink" id="Q98UK5"/>
<dbReference type="PRO" id="PR:Q98UK5"/>
<dbReference type="Proteomes" id="UP000000437">
    <property type="component" value="Unplaced"/>
</dbReference>
<dbReference type="Bgee" id="ENSDARG00000017121">
    <property type="expression patterns" value="Expressed in rhombomere 6 and 43 other cell types or tissues"/>
</dbReference>
<dbReference type="ExpressionAtlas" id="Q98UK5">
    <property type="expression patterns" value="baseline and differential"/>
</dbReference>
<dbReference type="GO" id="GO:0005634">
    <property type="term" value="C:nucleus"/>
    <property type="evidence" value="ECO:0000318"/>
    <property type="project" value="GO_Central"/>
</dbReference>
<dbReference type="GO" id="GO:0000981">
    <property type="term" value="F:DNA-binding transcription factor activity, RNA polymerase II-specific"/>
    <property type="evidence" value="ECO:0000318"/>
    <property type="project" value="GO_Central"/>
</dbReference>
<dbReference type="GO" id="GO:0000978">
    <property type="term" value="F:RNA polymerase II cis-regulatory region sequence-specific DNA binding"/>
    <property type="evidence" value="ECO:0000318"/>
    <property type="project" value="GO_Central"/>
</dbReference>
<dbReference type="GO" id="GO:0021742">
    <property type="term" value="P:abducens nucleus development"/>
    <property type="evidence" value="ECO:0000315"/>
    <property type="project" value="ZFIN"/>
</dbReference>
<dbReference type="GO" id="GO:0009952">
    <property type="term" value="P:anterior/posterior pattern specification"/>
    <property type="evidence" value="ECO:0000315"/>
    <property type="project" value="ZFIN"/>
</dbReference>
<dbReference type="GO" id="GO:0009880">
    <property type="term" value="P:embryonic pattern specification"/>
    <property type="evidence" value="ECO:0000315"/>
    <property type="project" value="ZFIN"/>
</dbReference>
<dbReference type="GO" id="GO:0062236">
    <property type="term" value="P:ionocyte differentiation"/>
    <property type="evidence" value="ECO:0000315"/>
    <property type="project" value="ZFIN"/>
</dbReference>
<dbReference type="GO" id="GO:0001946">
    <property type="term" value="P:lymphangiogenesis"/>
    <property type="evidence" value="ECO:0000315"/>
    <property type="project" value="ZFIN"/>
</dbReference>
<dbReference type="GO" id="GO:0039021">
    <property type="term" value="P:pronephric glomerulus development"/>
    <property type="evidence" value="ECO:0000315"/>
    <property type="project" value="ZFIN"/>
</dbReference>
<dbReference type="GO" id="GO:0006355">
    <property type="term" value="P:regulation of DNA-templated transcription"/>
    <property type="evidence" value="ECO:0000250"/>
    <property type="project" value="UniProtKB"/>
</dbReference>
<dbReference type="GO" id="GO:0006357">
    <property type="term" value="P:regulation of transcription by RNA polymerase II"/>
    <property type="evidence" value="ECO:0000318"/>
    <property type="project" value="GO_Central"/>
</dbReference>
<dbReference type="GO" id="GO:0046548">
    <property type="term" value="P:retinal rod cell development"/>
    <property type="evidence" value="ECO:0000316"/>
    <property type="project" value="ZFIN"/>
</dbReference>
<dbReference type="GO" id="GO:0021571">
    <property type="term" value="P:rhombomere 5 development"/>
    <property type="evidence" value="ECO:0000315"/>
    <property type="project" value="ZFIN"/>
</dbReference>
<dbReference type="GO" id="GO:0021572">
    <property type="term" value="P:rhombomere 6 development"/>
    <property type="evidence" value="ECO:0000315"/>
    <property type="project" value="ZFIN"/>
</dbReference>
<dbReference type="GO" id="GO:0021654">
    <property type="term" value="P:rhombomere boundary formation"/>
    <property type="evidence" value="ECO:0000315"/>
    <property type="project" value="ZFIN"/>
</dbReference>
<dbReference type="CDD" id="cd14718">
    <property type="entry name" value="bZIP_Maf_large"/>
    <property type="match status" value="1"/>
</dbReference>
<dbReference type="FunFam" id="1.20.5.170:FF:000016">
    <property type="entry name" value="MAF bZIP transcription factor"/>
    <property type="match status" value="1"/>
</dbReference>
<dbReference type="Gene3D" id="1.20.5.170">
    <property type="match status" value="1"/>
</dbReference>
<dbReference type="InterPro" id="IPR004827">
    <property type="entry name" value="bZIP"/>
</dbReference>
<dbReference type="InterPro" id="IPR004826">
    <property type="entry name" value="bZIP_Maf"/>
</dbReference>
<dbReference type="InterPro" id="IPR046347">
    <property type="entry name" value="bZIP_sf"/>
</dbReference>
<dbReference type="InterPro" id="IPR013592">
    <property type="entry name" value="Maf_TF_N"/>
</dbReference>
<dbReference type="InterPro" id="IPR008917">
    <property type="entry name" value="TF_DNA-bd_sf"/>
</dbReference>
<dbReference type="InterPro" id="IPR024874">
    <property type="entry name" value="Transcription_factor_Maf_fam"/>
</dbReference>
<dbReference type="PANTHER" id="PTHR10129">
    <property type="entry name" value="TRANSCRIPTION FACTOR MAF"/>
    <property type="match status" value="1"/>
</dbReference>
<dbReference type="PANTHER" id="PTHR10129:SF10">
    <property type="entry name" value="TRANSCRIPTION FACTOR MAFB"/>
    <property type="match status" value="1"/>
</dbReference>
<dbReference type="Pfam" id="PF03131">
    <property type="entry name" value="bZIP_Maf"/>
    <property type="match status" value="1"/>
</dbReference>
<dbReference type="Pfam" id="PF08383">
    <property type="entry name" value="Maf_N"/>
    <property type="match status" value="1"/>
</dbReference>
<dbReference type="SMART" id="SM00338">
    <property type="entry name" value="BRLZ"/>
    <property type="match status" value="1"/>
</dbReference>
<dbReference type="SUPFAM" id="SSF47454">
    <property type="entry name" value="A DNA-binding domain in eukaryotic transcription factors"/>
    <property type="match status" value="1"/>
</dbReference>
<dbReference type="SUPFAM" id="SSF57959">
    <property type="entry name" value="Leucine zipper domain"/>
    <property type="match status" value="1"/>
</dbReference>
<dbReference type="PROSITE" id="PS50217">
    <property type="entry name" value="BZIP"/>
    <property type="match status" value="1"/>
</dbReference>
<name>MAFB_DANRE</name>
<evidence type="ECO:0000250" key="1"/>
<evidence type="ECO:0000255" key="2">
    <source>
        <dbReference type="PROSITE-ProRule" id="PRU00978"/>
    </source>
</evidence>
<evidence type="ECO:0000256" key="3">
    <source>
        <dbReference type="SAM" id="MobiDB-lite"/>
    </source>
</evidence>
<evidence type="ECO:0000269" key="4">
    <source>
    </source>
</evidence>
<evidence type="ECO:0000269" key="5">
    <source>
    </source>
</evidence>
<evidence type="ECO:0000305" key="6"/>
<feature type="chain" id="PRO_0000366125" description="Transcription factor MafB">
    <location>
        <begin position="1"/>
        <end position="356"/>
    </location>
</feature>
<feature type="domain" description="bZIP" evidence="2">
    <location>
        <begin position="270"/>
        <end position="333"/>
    </location>
</feature>
<feature type="region of interest" description="Disordered" evidence="3">
    <location>
        <begin position="49"/>
        <end position="79"/>
    </location>
</feature>
<feature type="region of interest" description="Disordered" evidence="3">
    <location>
        <begin position="140"/>
        <end position="240"/>
    </location>
</feature>
<feature type="region of interest" description="Basic motif" evidence="2">
    <location>
        <begin position="270"/>
        <end position="295"/>
    </location>
</feature>
<feature type="region of interest" description="Leucine-zipper" evidence="2">
    <location>
        <begin position="298"/>
        <end position="319"/>
    </location>
</feature>
<feature type="compositionally biased region" description="Low complexity" evidence="3">
    <location>
        <begin position="55"/>
        <end position="77"/>
    </location>
</feature>
<feature type="compositionally biased region" description="Basic residues" evidence="3">
    <location>
        <begin position="183"/>
        <end position="196"/>
    </location>
</feature>
<feature type="compositionally biased region" description="Basic residues" evidence="3">
    <location>
        <begin position="212"/>
        <end position="223"/>
    </location>
</feature>